<gene>
    <name type="ordered locus">MT2372</name>
</gene>
<accession>P9WLC2</accession>
<accession>L0TBY0</accession>
<accession>P64987</accession>
<accession>P71902</accession>
<sequence>MVAALHAGKAVTIAPQSMTLTTQQAADLLGVSRPTVVRLIKSGELAAERIGNRHRLVLDDVLAYREARRQRQYDALAESAMDIDADEDPEVICEQLREARRVVAARRRTERRRA</sequence>
<organism>
    <name type="scientific">Mycobacterium tuberculosis (strain CDC 1551 / Oshkosh)</name>
    <dbReference type="NCBI Taxonomy" id="83331"/>
    <lineage>
        <taxon>Bacteria</taxon>
        <taxon>Bacillati</taxon>
        <taxon>Actinomycetota</taxon>
        <taxon>Actinomycetes</taxon>
        <taxon>Mycobacteriales</taxon>
        <taxon>Mycobacteriaceae</taxon>
        <taxon>Mycobacterium</taxon>
        <taxon>Mycobacterium tuberculosis complex</taxon>
    </lineage>
</organism>
<feature type="chain" id="PRO_0000427504" description="Uncharacterized protein MT2372">
    <location>
        <begin position="1"/>
        <end position="114"/>
    </location>
</feature>
<protein>
    <recommendedName>
        <fullName>Uncharacterized protein MT2372</fullName>
    </recommendedName>
</protein>
<dbReference type="EMBL" id="AE000516">
    <property type="protein sequence ID" value="AAK46665.1"/>
    <property type="molecule type" value="Genomic_DNA"/>
</dbReference>
<dbReference type="PIR" id="G70702">
    <property type="entry name" value="G70702"/>
</dbReference>
<dbReference type="SMR" id="P9WLC2"/>
<dbReference type="KEGG" id="mtc:MT2372"/>
<dbReference type="PATRIC" id="fig|83331.31.peg.2556"/>
<dbReference type="HOGENOM" id="CLU_147973_0_0_11"/>
<dbReference type="Proteomes" id="UP000001020">
    <property type="component" value="Chromosome"/>
</dbReference>
<dbReference type="GO" id="GO:0003677">
    <property type="term" value="F:DNA binding"/>
    <property type="evidence" value="ECO:0007669"/>
    <property type="project" value="InterPro"/>
</dbReference>
<dbReference type="Gene3D" id="1.10.1660.10">
    <property type="match status" value="1"/>
</dbReference>
<dbReference type="InterPro" id="IPR009061">
    <property type="entry name" value="DNA-bd_dom_put_sf"/>
</dbReference>
<dbReference type="InterPro" id="IPR041657">
    <property type="entry name" value="HTH_17"/>
</dbReference>
<dbReference type="InterPro" id="IPR010093">
    <property type="entry name" value="SinI_DNA-bd"/>
</dbReference>
<dbReference type="NCBIfam" id="TIGR01764">
    <property type="entry name" value="excise"/>
    <property type="match status" value="1"/>
</dbReference>
<dbReference type="Pfam" id="PF12728">
    <property type="entry name" value="HTH_17"/>
    <property type="match status" value="1"/>
</dbReference>
<dbReference type="SUPFAM" id="SSF46955">
    <property type="entry name" value="Putative DNA-binding domain"/>
    <property type="match status" value="1"/>
</dbReference>
<keyword id="KW-1185">Reference proteome</keyword>
<reference key="1">
    <citation type="journal article" date="2002" name="J. Bacteriol.">
        <title>Whole-genome comparison of Mycobacterium tuberculosis clinical and laboratory strains.</title>
        <authorList>
            <person name="Fleischmann R.D."/>
            <person name="Alland D."/>
            <person name="Eisen J.A."/>
            <person name="Carpenter L."/>
            <person name="White O."/>
            <person name="Peterson J.D."/>
            <person name="DeBoy R.T."/>
            <person name="Dodson R.J."/>
            <person name="Gwinn M.L."/>
            <person name="Haft D.H."/>
            <person name="Hickey E.K."/>
            <person name="Kolonay J.F."/>
            <person name="Nelson W.C."/>
            <person name="Umayam L.A."/>
            <person name="Ermolaeva M.D."/>
            <person name="Salzberg S.L."/>
            <person name="Delcher A."/>
            <person name="Utterback T.R."/>
            <person name="Weidman J.F."/>
            <person name="Khouri H.M."/>
            <person name="Gill J."/>
            <person name="Mikula A."/>
            <person name="Bishai W."/>
            <person name="Jacobs W.R. Jr."/>
            <person name="Venter J.C."/>
            <person name="Fraser C.M."/>
        </authorList>
    </citation>
    <scope>NUCLEOTIDE SEQUENCE [LARGE SCALE GENOMIC DNA]</scope>
    <source>
        <strain>CDC 1551 / Oshkosh</strain>
    </source>
</reference>
<proteinExistence type="predicted"/>
<name>Y2310_MYCTO</name>